<protein>
    <recommendedName>
        <fullName evidence="1">UPF0208 membrane protein YPA_2054</fullName>
    </recommendedName>
</protein>
<dbReference type="EMBL" id="CP000308">
    <property type="protein sequence ID" value="ABG14020.1"/>
    <property type="molecule type" value="Genomic_DNA"/>
</dbReference>
<dbReference type="KEGG" id="ypa:YPA_2054"/>
<dbReference type="Proteomes" id="UP000001971">
    <property type="component" value="Chromosome"/>
</dbReference>
<dbReference type="GO" id="GO:0005886">
    <property type="term" value="C:plasma membrane"/>
    <property type="evidence" value="ECO:0007669"/>
    <property type="project" value="UniProtKB-SubCell"/>
</dbReference>
<dbReference type="HAMAP" id="MF_01101">
    <property type="entry name" value="UPF0208"/>
    <property type="match status" value="1"/>
</dbReference>
<dbReference type="InterPro" id="IPR007334">
    <property type="entry name" value="UPF0208"/>
</dbReference>
<dbReference type="NCBIfam" id="NF002493">
    <property type="entry name" value="PRK01816.1"/>
    <property type="match status" value="1"/>
</dbReference>
<dbReference type="Pfam" id="PF04217">
    <property type="entry name" value="DUF412"/>
    <property type="match status" value="1"/>
</dbReference>
<organism>
    <name type="scientific">Yersinia pestis bv. Antiqua (strain Antiqua)</name>
    <dbReference type="NCBI Taxonomy" id="360102"/>
    <lineage>
        <taxon>Bacteria</taxon>
        <taxon>Pseudomonadati</taxon>
        <taxon>Pseudomonadota</taxon>
        <taxon>Gammaproteobacteria</taxon>
        <taxon>Enterobacterales</taxon>
        <taxon>Yersiniaceae</taxon>
        <taxon>Yersinia</taxon>
    </lineage>
</organism>
<sequence>MTIKPSDSVSWFQVLQRGQHYMKTWPADKRLAPVFPENRVTVVTRFGIRFMPPLAIFTLTWQIALGGQLGPAIATALFACGLPLQGLWWLGKRAITPLPPTLLQWFHEVRHKLFEAGQAVAPIEPIPTYQSLADLLKRAFKQLDKTFLDDL</sequence>
<accession>Q1C6A2</accession>
<feature type="chain" id="PRO_1000064988" description="UPF0208 membrane protein YPA_2054">
    <location>
        <begin position="1"/>
        <end position="151"/>
    </location>
</feature>
<feature type="transmembrane region" description="Helical" evidence="1">
    <location>
        <begin position="46"/>
        <end position="66"/>
    </location>
</feature>
<feature type="transmembrane region" description="Helical" evidence="1">
    <location>
        <begin position="69"/>
        <end position="89"/>
    </location>
</feature>
<keyword id="KW-0997">Cell inner membrane</keyword>
<keyword id="KW-1003">Cell membrane</keyword>
<keyword id="KW-0472">Membrane</keyword>
<keyword id="KW-0812">Transmembrane</keyword>
<keyword id="KW-1133">Transmembrane helix</keyword>
<proteinExistence type="inferred from homology"/>
<gene>
    <name type="ordered locus">YPA_2054</name>
</gene>
<evidence type="ECO:0000255" key="1">
    <source>
        <dbReference type="HAMAP-Rule" id="MF_01101"/>
    </source>
</evidence>
<reference key="1">
    <citation type="journal article" date="2006" name="J. Bacteriol.">
        <title>Complete genome sequence of Yersinia pestis strains Antiqua and Nepal516: evidence of gene reduction in an emerging pathogen.</title>
        <authorList>
            <person name="Chain P.S.G."/>
            <person name="Hu P."/>
            <person name="Malfatti S.A."/>
            <person name="Radnedge L."/>
            <person name="Larimer F."/>
            <person name="Vergez L.M."/>
            <person name="Worsham P."/>
            <person name="Chu M.C."/>
            <person name="Andersen G.L."/>
        </authorList>
    </citation>
    <scope>NUCLEOTIDE SEQUENCE [LARGE SCALE GENOMIC DNA]</scope>
    <source>
        <strain>Antiqua</strain>
    </source>
</reference>
<comment type="subcellular location">
    <subcellularLocation>
        <location evidence="1">Cell inner membrane</location>
        <topology evidence="1">Multi-pass membrane protein</topology>
    </subcellularLocation>
</comment>
<comment type="similarity">
    <text evidence="1">Belongs to the UPF0208 family.</text>
</comment>
<name>Y2054_YERPA</name>